<accession>Q5I156</accession>
<organism>
    <name type="scientific">Microplitis demolitor bracovirus (isolate Webb)</name>
    <name type="common">MdBV</name>
    <dbReference type="NCBI Taxonomy" id="654919"/>
    <lineage>
        <taxon>Viruses</taxon>
        <taxon>Viruses incertae sedis</taxon>
        <taxon>Polydnaviriformidae</taxon>
        <taxon>Bracoviriform</taxon>
        <taxon>Microplitis demolitor bracovirus</taxon>
    </lineage>
</organism>
<dbReference type="EMBL" id="AY875682">
    <property type="protein sequence ID" value="AAW51776.1"/>
    <property type="molecule type" value="Genomic_DNA"/>
</dbReference>
<dbReference type="RefSeq" id="YP_239372.1">
    <property type="nucleotide sequence ID" value="NC_007032.1"/>
</dbReference>
<dbReference type="SMR" id="Q5I156"/>
<dbReference type="KEGG" id="vg:5075806"/>
<dbReference type="Proteomes" id="UP000008168">
    <property type="component" value="Genome"/>
</dbReference>
<dbReference type="GO" id="GO:0085034">
    <property type="term" value="P:symbiont-mediated suppression of host NF-kappaB cascade"/>
    <property type="evidence" value="ECO:0007669"/>
    <property type="project" value="UniProtKB-KW"/>
</dbReference>
<dbReference type="Gene3D" id="1.25.40.20">
    <property type="entry name" value="Ankyrin repeat-containing domain"/>
    <property type="match status" value="1"/>
</dbReference>
<dbReference type="InterPro" id="IPR002110">
    <property type="entry name" value="Ankyrin_rpt"/>
</dbReference>
<dbReference type="InterPro" id="IPR036770">
    <property type="entry name" value="Ankyrin_rpt-contain_sf"/>
</dbReference>
<dbReference type="PANTHER" id="PTHR24198">
    <property type="entry name" value="ANKYRIN REPEAT AND PROTEIN KINASE DOMAIN-CONTAINING PROTEIN"/>
    <property type="match status" value="1"/>
</dbReference>
<dbReference type="PANTHER" id="PTHR24198:SF165">
    <property type="entry name" value="ANKYRIN REPEAT-CONTAINING PROTEIN-RELATED"/>
    <property type="match status" value="1"/>
</dbReference>
<dbReference type="Pfam" id="PF12796">
    <property type="entry name" value="Ank_2"/>
    <property type="match status" value="1"/>
</dbReference>
<dbReference type="SMART" id="SM00248">
    <property type="entry name" value="ANK"/>
    <property type="match status" value="3"/>
</dbReference>
<dbReference type="SUPFAM" id="SSF48403">
    <property type="entry name" value="Ankyrin repeat"/>
    <property type="match status" value="1"/>
</dbReference>
<dbReference type="PROSITE" id="PS50297">
    <property type="entry name" value="ANK_REP_REGION"/>
    <property type="match status" value="1"/>
</dbReference>
<organismHost>
    <name type="scientific">Microplitis demolitor</name>
    <name type="common">Parasitoid wasp</name>
    <dbReference type="NCBI Taxonomy" id="69319"/>
</organismHost>
<reference key="1">
    <citation type="journal article" date="2006" name="Virology">
        <title>Polydnavirus genomes reflect their dual roles as mutualists and pathogens.</title>
        <authorList>
            <person name="Webb B.A."/>
            <person name="Strand M.R."/>
            <person name="Dickey S.E."/>
            <person name="Beck M.H."/>
            <person name="Hilgarth R.S."/>
            <person name="Barney W.E."/>
            <person name="Kadash K."/>
            <person name="Kroemer J.A."/>
            <person name="Lindstrom K.G."/>
            <person name="Rattanadechakul W."/>
            <person name="Shelby K.S."/>
            <person name="Thoetkiattikul H."/>
            <person name="Turnbull M.W."/>
            <person name="Witherell R.A."/>
        </authorList>
    </citation>
    <scope>NUCLEOTIDE SEQUENCE [GENOMIC DNA]</scope>
</reference>
<feature type="chain" id="PRO_0000405361" description="I-Kappa-B like protein F1">
    <location>
        <begin position="1"/>
        <end position="164"/>
    </location>
</feature>
<feature type="repeat" description="ANK 1">
    <location>
        <begin position="57"/>
        <end position="89"/>
    </location>
</feature>
<feature type="repeat" description="ANK 2">
    <location>
        <begin position="94"/>
        <end position="124"/>
    </location>
</feature>
<feature type="repeat" description="ANK 3">
    <location>
        <begin position="128"/>
        <end position="157"/>
    </location>
</feature>
<protein>
    <recommendedName>
        <fullName>I-Kappa-B like protein F1</fullName>
    </recommendedName>
</protein>
<proteinExistence type="inferred from homology"/>
<comment type="function">
    <text evidence="1">Suppresses the host immune response through NF-kappa-B inactivation. Possesses ankyrin repeat domains required for NF-kappa-B binding but lacks the regulatory regions required for dissociation from NF-kappa-B and degradation. Therefore, prevents host NF-kappa-B release and subsequent activation (By similarity).</text>
</comment>
<comment type="similarity">
    <text evidence="2">Belongs to the polydnaviridae I-Kappa-B-like protein family.</text>
</comment>
<sequence>MMEEVGTAGNNLGATEIDHDEQNTFLRICRTGSIYELMEVTPFFGGDRHLLHRYDRHGRQCIHTVAWHDRANAVMKIEILMQSGVNINAKELGTGNTLLHIAASTGNYLLADWFCQQLGVDLGASNNQQETAYYIAYKMRDRKMMKLLRAHGVAYNNTLSAGLL</sequence>
<keyword id="KW-0040">ANK repeat</keyword>
<keyword id="KW-0945">Host-virus interaction</keyword>
<keyword id="KW-1100">Inhibition of host NF-kappa-B by virus</keyword>
<keyword id="KW-1185">Reference proteome</keyword>
<keyword id="KW-0677">Repeat</keyword>
<evidence type="ECO:0000250" key="1"/>
<evidence type="ECO:0000305" key="2"/>
<gene>
    <name type="primary">F2</name>
</gene>
<name>IKBF1_MDBVW</name>